<reference key="1">
    <citation type="journal article" date="2005" name="Plant Mol. Biol.">
        <title>Complete chloroplast genome sequence of Glycine max and comparative analyses with other legume genomes.</title>
        <authorList>
            <person name="Saski C."/>
            <person name="Lee S.-B."/>
            <person name="Daniell H."/>
            <person name="Wood T.C."/>
            <person name="Tomkins J."/>
            <person name="Kim H.-G."/>
            <person name="Jansen R.K."/>
        </authorList>
    </citation>
    <scope>NUCLEOTIDE SEQUENCE [LARGE SCALE GENOMIC DNA]</scope>
    <source>
        <strain>cv. PI 437654</strain>
    </source>
</reference>
<geneLocation type="chloroplast"/>
<keyword id="KW-0150">Chloroplast</keyword>
<keyword id="KW-0240">DNA-directed RNA polymerase</keyword>
<keyword id="KW-0548">Nucleotidyltransferase</keyword>
<keyword id="KW-0934">Plastid</keyword>
<keyword id="KW-1185">Reference proteome</keyword>
<keyword id="KW-0804">Transcription</keyword>
<keyword id="KW-0808">Transferase</keyword>
<organism>
    <name type="scientific">Glycine max</name>
    <name type="common">Soybean</name>
    <name type="synonym">Glycine hispida</name>
    <dbReference type="NCBI Taxonomy" id="3847"/>
    <lineage>
        <taxon>Eukaryota</taxon>
        <taxon>Viridiplantae</taxon>
        <taxon>Streptophyta</taxon>
        <taxon>Embryophyta</taxon>
        <taxon>Tracheophyta</taxon>
        <taxon>Spermatophyta</taxon>
        <taxon>Magnoliopsida</taxon>
        <taxon>eudicotyledons</taxon>
        <taxon>Gunneridae</taxon>
        <taxon>Pentapetalae</taxon>
        <taxon>rosids</taxon>
        <taxon>fabids</taxon>
        <taxon>Fabales</taxon>
        <taxon>Fabaceae</taxon>
        <taxon>Papilionoideae</taxon>
        <taxon>50 kb inversion clade</taxon>
        <taxon>NPAAA clade</taxon>
        <taxon>indigoferoid/millettioid clade</taxon>
        <taxon>Phaseoleae</taxon>
        <taxon>Glycine</taxon>
        <taxon>Glycine subgen. Soja</taxon>
    </lineage>
</organism>
<evidence type="ECO:0000255" key="1">
    <source>
        <dbReference type="HAMAP-Rule" id="MF_00059"/>
    </source>
</evidence>
<proteinExistence type="inferred from homology"/>
<gene>
    <name evidence="1" type="primary">rpoA</name>
</gene>
<accession>Q2PMQ3</accession>
<sequence length="333" mass="38719">MVREKIRVSTRTLQWKCVESRIDSKRLYYGRFILSPLMKGQADTIGIAMRRVLLGEIEGTCITRVKSEKIPHEYSTIIGIEESVHEILMNLKEIVLRSNLYGTRDASICFKGPGYVTAQDIILPPSVEIVDNTQHIANVTEPVNLCIELKIERNRGYRIKTLKNFQDGSYPIDATFMPVRNVNHSIHSYVNGNEKQEILFLEIWTNGSLTPKEALYEASRNLIDLFIPFLHAEEDNFNLENNQHKVTLPLFTFHDILAKEKLRKKKKEIALKSIFIDQLELPPRIYNCLKRSNIHTLLELLNNSQEDLLKIEHFRVEDVKYILDFLEIEKHFA</sequence>
<name>RPOA_SOYBN</name>
<dbReference type="EC" id="2.7.7.6" evidence="1"/>
<dbReference type="EMBL" id="DQ317523">
    <property type="protein sequence ID" value="ABC25155.1"/>
    <property type="molecule type" value="Genomic_DNA"/>
</dbReference>
<dbReference type="RefSeq" id="YP_538797.1">
    <property type="nucleotide sequence ID" value="NC_007942.1"/>
</dbReference>
<dbReference type="SMR" id="Q2PMQ3"/>
<dbReference type="FunCoup" id="Q2PMQ3">
    <property type="interactions" value="233"/>
</dbReference>
<dbReference type="STRING" id="3847.Q2PMQ3"/>
<dbReference type="GeneID" id="3989329"/>
<dbReference type="KEGG" id="gmx:3989329"/>
<dbReference type="InParanoid" id="Q2PMQ3"/>
<dbReference type="Proteomes" id="UP000008827">
    <property type="component" value="Chloroplast"/>
</dbReference>
<dbReference type="GO" id="GO:0009507">
    <property type="term" value="C:chloroplast"/>
    <property type="evidence" value="ECO:0007669"/>
    <property type="project" value="UniProtKB-SubCell"/>
</dbReference>
<dbReference type="GO" id="GO:0000428">
    <property type="term" value="C:DNA-directed RNA polymerase complex"/>
    <property type="evidence" value="ECO:0007669"/>
    <property type="project" value="UniProtKB-KW"/>
</dbReference>
<dbReference type="GO" id="GO:0005739">
    <property type="term" value="C:mitochondrion"/>
    <property type="evidence" value="ECO:0007669"/>
    <property type="project" value="GOC"/>
</dbReference>
<dbReference type="GO" id="GO:0003677">
    <property type="term" value="F:DNA binding"/>
    <property type="evidence" value="ECO:0007669"/>
    <property type="project" value="UniProtKB-UniRule"/>
</dbReference>
<dbReference type="GO" id="GO:0003899">
    <property type="term" value="F:DNA-directed RNA polymerase activity"/>
    <property type="evidence" value="ECO:0007669"/>
    <property type="project" value="UniProtKB-UniRule"/>
</dbReference>
<dbReference type="GO" id="GO:0046983">
    <property type="term" value="F:protein dimerization activity"/>
    <property type="evidence" value="ECO:0007669"/>
    <property type="project" value="InterPro"/>
</dbReference>
<dbReference type="GO" id="GO:0006351">
    <property type="term" value="P:DNA-templated transcription"/>
    <property type="evidence" value="ECO:0007669"/>
    <property type="project" value="UniProtKB-UniRule"/>
</dbReference>
<dbReference type="CDD" id="cd06928">
    <property type="entry name" value="RNAP_alpha_NTD"/>
    <property type="match status" value="1"/>
</dbReference>
<dbReference type="FunFam" id="2.170.120.12:FF:000001">
    <property type="entry name" value="DNA-directed RNA polymerase subunit alpha"/>
    <property type="match status" value="1"/>
</dbReference>
<dbReference type="FunFam" id="3.30.1360.10:FF:000039">
    <property type="entry name" value="DNA-directed RNA polymerase subunit alpha"/>
    <property type="match status" value="1"/>
</dbReference>
<dbReference type="Gene3D" id="1.10.150.20">
    <property type="entry name" value="5' to 3' exonuclease, C-terminal subdomain"/>
    <property type="match status" value="1"/>
</dbReference>
<dbReference type="Gene3D" id="2.170.120.12">
    <property type="entry name" value="DNA-directed RNA polymerase, insert domain"/>
    <property type="match status" value="1"/>
</dbReference>
<dbReference type="Gene3D" id="3.30.1360.10">
    <property type="entry name" value="RNA polymerase, RBP11-like subunit"/>
    <property type="match status" value="1"/>
</dbReference>
<dbReference type="HAMAP" id="MF_00059">
    <property type="entry name" value="RNApol_bact_RpoA"/>
    <property type="match status" value="1"/>
</dbReference>
<dbReference type="InterPro" id="IPR011262">
    <property type="entry name" value="DNA-dir_RNA_pol_insert"/>
</dbReference>
<dbReference type="InterPro" id="IPR011263">
    <property type="entry name" value="DNA-dir_RNA_pol_RpoA/D/Rpb3"/>
</dbReference>
<dbReference type="InterPro" id="IPR011773">
    <property type="entry name" value="DNA-dir_RpoA"/>
</dbReference>
<dbReference type="InterPro" id="IPR036603">
    <property type="entry name" value="RBP11-like"/>
</dbReference>
<dbReference type="InterPro" id="IPR011260">
    <property type="entry name" value="RNAP_asu_C"/>
</dbReference>
<dbReference type="InterPro" id="IPR036643">
    <property type="entry name" value="RNApol_insert_sf"/>
</dbReference>
<dbReference type="NCBIfam" id="TIGR02027">
    <property type="entry name" value="rpoA"/>
    <property type="match status" value="1"/>
</dbReference>
<dbReference type="Pfam" id="PF01000">
    <property type="entry name" value="RNA_pol_A_bac"/>
    <property type="match status" value="1"/>
</dbReference>
<dbReference type="Pfam" id="PF03118">
    <property type="entry name" value="RNA_pol_A_CTD"/>
    <property type="match status" value="1"/>
</dbReference>
<dbReference type="Pfam" id="PF01193">
    <property type="entry name" value="RNA_pol_L"/>
    <property type="match status" value="1"/>
</dbReference>
<dbReference type="SMART" id="SM00662">
    <property type="entry name" value="RPOLD"/>
    <property type="match status" value="1"/>
</dbReference>
<dbReference type="SUPFAM" id="SSF47789">
    <property type="entry name" value="C-terminal domain of RNA polymerase alpha subunit"/>
    <property type="match status" value="1"/>
</dbReference>
<dbReference type="SUPFAM" id="SSF56553">
    <property type="entry name" value="Insert subdomain of RNA polymerase alpha subunit"/>
    <property type="match status" value="1"/>
</dbReference>
<dbReference type="SUPFAM" id="SSF55257">
    <property type="entry name" value="RBP11-like subunits of RNA polymerase"/>
    <property type="match status" value="1"/>
</dbReference>
<protein>
    <recommendedName>
        <fullName evidence="1">DNA-directed RNA polymerase subunit alpha</fullName>
        <shortName evidence="1">PEP</shortName>
        <ecNumber evidence="1">2.7.7.6</ecNumber>
    </recommendedName>
    <alternativeName>
        <fullName evidence="1">Plastid-encoded RNA polymerase subunit alpha</fullName>
        <shortName evidence="1">RNA polymerase subunit alpha</shortName>
    </alternativeName>
</protein>
<comment type="function">
    <text evidence="1">DNA-dependent RNA polymerase catalyzes the transcription of DNA into RNA using the four ribonucleoside triphosphates as substrates.</text>
</comment>
<comment type="catalytic activity">
    <reaction evidence="1">
        <text>RNA(n) + a ribonucleoside 5'-triphosphate = RNA(n+1) + diphosphate</text>
        <dbReference type="Rhea" id="RHEA:21248"/>
        <dbReference type="Rhea" id="RHEA-COMP:14527"/>
        <dbReference type="Rhea" id="RHEA-COMP:17342"/>
        <dbReference type="ChEBI" id="CHEBI:33019"/>
        <dbReference type="ChEBI" id="CHEBI:61557"/>
        <dbReference type="ChEBI" id="CHEBI:140395"/>
        <dbReference type="EC" id="2.7.7.6"/>
    </reaction>
</comment>
<comment type="subunit">
    <text evidence="1">In plastids the minimal PEP RNA polymerase catalytic core is composed of four subunits: alpha, beta, beta', and beta''. When a (nuclear-encoded) sigma factor is associated with the core the holoenzyme is formed, which can initiate transcription.</text>
</comment>
<comment type="subcellular location">
    <subcellularLocation>
        <location>Plastid</location>
        <location>Chloroplast</location>
    </subcellularLocation>
</comment>
<comment type="domain">
    <text evidence="1">The N-terminal domain is essential for RNAP assembly and basal transcription, whereas the C-terminal domain is involved in interaction with transcriptional regulators and with upstream promoter elements.</text>
</comment>
<comment type="similarity">
    <text evidence="1">Belongs to the RNA polymerase alpha chain family.</text>
</comment>
<feature type="chain" id="PRO_0000225927" description="DNA-directed RNA polymerase subunit alpha">
    <location>
        <begin position="1"/>
        <end position="333"/>
    </location>
</feature>
<feature type="region of interest" description="Alpha N-terminal domain (alpha-NTD)" evidence="1">
    <location>
        <begin position="1"/>
        <end position="233"/>
    </location>
</feature>
<feature type="region of interest" description="Alpha C-terminal domain (alpha-CTD)" evidence="1">
    <location>
        <begin position="267"/>
        <end position="333"/>
    </location>
</feature>